<gene>
    <name evidence="1" type="primary">rplT</name>
    <name type="ordered locus">TTE1691</name>
</gene>
<protein>
    <recommendedName>
        <fullName evidence="1">Large ribosomal subunit protein bL20</fullName>
    </recommendedName>
    <alternativeName>
        <fullName evidence="2">50S ribosomal protein L20</fullName>
    </alternativeName>
</protein>
<keyword id="KW-1185">Reference proteome</keyword>
<keyword id="KW-0687">Ribonucleoprotein</keyword>
<keyword id="KW-0689">Ribosomal protein</keyword>
<keyword id="KW-0694">RNA-binding</keyword>
<keyword id="KW-0699">rRNA-binding</keyword>
<proteinExistence type="inferred from homology"/>
<dbReference type="EMBL" id="AE008691">
    <property type="protein sequence ID" value="AAM24892.1"/>
    <property type="molecule type" value="Genomic_DNA"/>
</dbReference>
<dbReference type="RefSeq" id="WP_011025900.1">
    <property type="nucleotide sequence ID" value="NC_003869.1"/>
</dbReference>
<dbReference type="SMR" id="Q8R9C4"/>
<dbReference type="STRING" id="273068.TTE1691"/>
<dbReference type="KEGG" id="tte:TTE1691"/>
<dbReference type="eggNOG" id="COG0292">
    <property type="taxonomic scope" value="Bacteria"/>
</dbReference>
<dbReference type="HOGENOM" id="CLU_123265_0_1_9"/>
<dbReference type="OrthoDB" id="9808966at2"/>
<dbReference type="Proteomes" id="UP000000555">
    <property type="component" value="Chromosome"/>
</dbReference>
<dbReference type="GO" id="GO:1990904">
    <property type="term" value="C:ribonucleoprotein complex"/>
    <property type="evidence" value="ECO:0007669"/>
    <property type="project" value="UniProtKB-KW"/>
</dbReference>
<dbReference type="GO" id="GO:0005840">
    <property type="term" value="C:ribosome"/>
    <property type="evidence" value="ECO:0007669"/>
    <property type="project" value="UniProtKB-KW"/>
</dbReference>
<dbReference type="GO" id="GO:0019843">
    <property type="term" value="F:rRNA binding"/>
    <property type="evidence" value="ECO:0007669"/>
    <property type="project" value="UniProtKB-UniRule"/>
</dbReference>
<dbReference type="GO" id="GO:0003735">
    <property type="term" value="F:structural constituent of ribosome"/>
    <property type="evidence" value="ECO:0007669"/>
    <property type="project" value="InterPro"/>
</dbReference>
<dbReference type="GO" id="GO:0000027">
    <property type="term" value="P:ribosomal large subunit assembly"/>
    <property type="evidence" value="ECO:0007669"/>
    <property type="project" value="UniProtKB-UniRule"/>
</dbReference>
<dbReference type="GO" id="GO:0006412">
    <property type="term" value="P:translation"/>
    <property type="evidence" value="ECO:0007669"/>
    <property type="project" value="InterPro"/>
</dbReference>
<dbReference type="CDD" id="cd07026">
    <property type="entry name" value="Ribosomal_L20"/>
    <property type="match status" value="1"/>
</dbReference>
<dbReference type="FunFam" id="1.10.1900.20:FF:000001">
    <property type="entry name" value="50S ribosomal protein L20"/>
    <property type="match status" value="1"/>
</dbReference>
<dbReference type="Gene3D" id="6.10.160.10">
    <property type="match status" value="1"/>
</dbReference>
<dbReference type="Gene3D" id="1.10.1900.20">
    <property type="entry name" value="Ribosomal protein L20"/>
    <property type="match status" value="1"/>
</dbReference>
<dbReference type="HAMAP" id="MF_00382">
    <property type="entry name" value="Ribosomal_bL20"/>
    <property type="match status" value="1"/>
</dbReference>
<dbReference type="InterPro" id="IPR005813">
    <property type="entry name" value="Ribosomal_bL20"/>
</dbReference>
<dbReference type="InterPro" id="IPR049946">
    <property type="entry name" value="RIBOSOMAL_L20_CS"/>
</dbReference>
<dbReference type="InterPro" id="IPR035566">
    <property type="entry name" value="Ribosomal_protein_bL20_C"/>
</dbReference>
<dbReference type="NCBIfam" id="TIGR01032">
    <property type="entry name" value="rplT_bact"/>
    <property type="match status" value="1"/>
</dbReference>
<dbReference type="PANTHER" id="PTHR10986">
    <property type="entry name" value="39S RIBOSOMAL PROTEIN L20"/>
    <property type="match status" value="1"/>
</dbReference>
<dbReference type="Pfam" id="PF00453">
    <property type="entry name" value="Ribosomal_L20"/>
    <property type="match status" value="1"/>
</dbReference>
<dbReference type="PRINTS" id="PR00062">
    <property type="entry name" value="RIBOSOMALL20"/>
</dbReference>
<dbReference type="SUPFAM" id="SSF74731">
    <property type="entry name" value="Ribosomal protein L20"/>
    <property type="match status" value="1"/>
</dbReference>
<dbReference type="PROSITE" id="PS00937">
    <property type="entry name" value="RIBOSOMAL_L20"/>
    <property type="match status" value="1"/>
</dbReference>
<sequence length="119" mass="13798">MARVKSGKVTRRRHKKILKLAKGYWGAKSKLFRVANQAVMKSLMYAYIGRKLRKRDFRRLWITRINAAARAYGISYSRFINGLKKAGIEINRKMLSEMAIHDEKAFAELVNIAKQQLNA</sequence>
<organism>
    <name type="scientific">Caldanaerobacter subterraneus subsp. tengcongensis (strain DSM 15242 / JCM 11007 / NBRC 100824 / MB4)</name>
    <name type="common">Thermoanaerobacter tengcongensis</name>
    <dbReference type="NCBI Taxonomy" id="273068"/>
    <lineage>
        <taxon>Bacteria</taxon>
        <taxon>Bacillati</taxon>
        <taxon>Bacillota</taxon>
        <taxon>Clostridia</taxon>
        <taxon>Thermoanaerobacterales</taxon>
        <taxon>Thermoanaerobacteraceae</taxon>
        <taxon>Caldanaerobacter</taxon>
    </lineage>
</organism>
<accession>Q8R9C4</accession>
<name>RL20_CALS4</name>
<feature type="chain" id="PRO_0000177251" description="Large ribosomal subunit protein bL20">
    <location>
        <begin position="1"/>
        <end position="119"/>
    </location>
</feature>
<comment type="function">
    <text evidence="1">Binds directly to 23S ribosomal RNA and is necessary for the in vitro assembly process of the 50S ribosomal subunit. It is not involved in the protein synthesizing functions of that subunit.</text>
</comment>
<comment type="similarity">
    <text evidence="1">Belongs to the bacterial ribosomal protein bL20 family.</text>
</comment>
<reference key="1">
    <citation type="journal article" date="2002" name="Genome Res.">
        <title>A complete sequence of the T. tengcongensis genome.</title>
        <authorList>
            <person name="Bao Q."/>
            <person name="Tian Y."/>
            <person name="Li W."/>
            <person name="Xu Z."/>
            <person name="Xuan Z."/>
            <person name="Hu S."/>
            <person name="Dong W."/>
            <person name="Yang J."/>
            <person name="Chen Y."/>
            <person name="Xue Y."/>
            <person name="Xu Y."/>
            <person name="Lai X."/>
            <person name="Huang L."/>
            <person name="Dong X."/>
            <person name="Ma Y."/>
            <person name="Ling L."/>
            <person name="Tan H."/>
            <person name="Chen R."/>
            <person name="Wang J."/>
            <person name="Yu J."/>
            <person name="Yang H."/>
        </authorList>
    </citation>
    <scope>NUCLEOTIDE SEQUENCE [LARGE SCALE GENOMIC DNA]</scope>
    <source>
        <strain>DSM 15242 / JCM 11007 / NBRC 100824 / MB4</strain>
    </source>
</reference>
<evidence type="ECO:0000255" key="1">
    <source>
        <dbReference type="HAMAP-Rule" id="MF_00382"/>
    </source>
</evidence>
<evidence type="ECO:0000305" key="2"/>